<proteinExistence type="evidence at transcript level"/>
<gene>
    <name evidence="9" type="primary">Plppr5</name>
    <name evidence="9" type="synonym">Lppr5</name>
</gene>
<organism>
    <name type="scientific">Mus musculus</name>
    <name type="common">Mouse</name>
    <dbReference type="NCBI Taxonomy" id="10090"/>
    <lineage>
        <taxon>Eukaryota</taxon>
        <taxon>Metazoa</taxon>
        <taxon>Chordata</taxon>
        <taxon>Craniata</taxon>
        <taxon>Vertebrata</taxon>
        <taxon>Euteleostomi</taxon>
        <taxon>Mammalia</taxon>
        <taxon>Eutheria</taxon>
        <taxon>Euarchontoglires</taxon>
        <taxon>Glires</taxon>
        <taxon>Rodentia</taxon>
        <taxon>Myomorpha</taxon>
        <taxon>Muroidea</taxon>
        <taxon>Muridae</taxon>
        <taxon>Murinae</taxon>
        <taxon>Mus</taxon>
        <taxon>Mus</taxon>
    </lineage>
</organism>
<evidence type="ECO:0000250" key="1">
    <source>
        <dbReference type="UniProtKB" id="Q32ZL2"/>
    </source>
</evidence>
<evidence type="ECO:0000250" key="2">
    <source>
        <dbReference type="UniProtKB" id="Q6WAY2"/>
    </source>
</evidence>
<evidence type="ECO:0000255" key="3"/>
<evidence type="ECO:0000269" key="4">
    <source>
    </source>
</evidence>
<evidence type="ECO:0000303" key="5">
    <source>
    </source>
</evidence>
<evidence type="ECO:0000303" key="6">
    <source>
    </source>
</evidence>
<evidence type="ECO:0000305" key="7"/>
<evidence type="ECO:0000305" key="8">
    <source>
    </source>
</evidence>
<evidence type="ECO:0000312" key="9">
    <source>
        <dbReference type="MGI" id="MGI:1923019"/>
    </source>
</evidence>
<protein>
    <recommendedName>
        <fullName evidence="1">Phospholipid phosphatase-related protein type 5</fullName>
    </recommendedName>
    <alternativeName>
        <fullName evidence="1">Lipid phosphate phosphatase-related protein type 5</fullName>
    </alternativeName>
    <alternativeName>
        <fullName evidence="8">Plasticity-related gene 5 protein</fullName>
        <shortName>PRG-5</shortName>
    </alternativeName>
</protein>
<comment type="function">
    <text evidence="4">Induces filopodia formation and promotes neurite growth in a CDC42-independent manner; impedes neurite growth inhibitory-mediated axonal retraction.</text>
</comment>
<comment type="subcellular location">
    <subcellularLocation>
        <location evidence="4">Cell membrane</location>
        <topology evidence="3">Multi-pass membrane protein</topology>
    </subcellularLocation>
</comment>
<comment type="alternative products">
    <event type="alternative splicing"/>
    <isoform>
        <id>Q8BJ52-1</id>
        <name>1</name>
        <sequence type="displayed"/>
    </isoform>
    <isoform>
        <id>Q8BJ52-2</id>
        <name>2</name>
        <sequence type="described" ref="VSP_031829"/>
    </isoform>
</comment>
<comment type="similarity">
    <text evidence="7">Belongs to the PA-phosphatase related phosphoesterase family.</text>
</comment>
<comment type="caution">
    <text evidence="2 7">Has most probably no lipid phosphatase activity (By similarity). Critical residues that support the reaction mechanism in active members of that protein family, including the residues of the active site acting respectively as proton donor and nucleophile, are not conserved.</text>
</comment>
<feature type="chain" id="PRO_0000321934" description="Phospholipid phosphatase-related protein type 5">
    <location>
        <begin position="1"/>
        <end position="321"/>
    </location>
</feature>
<feature type="transmembrane region" description="Helical" evidence="3">
    <location>
        <begin position="6"/>
        <end position="26"/>
    </location>
</feature>
<feature type="transmembrane region" description="Helical" evidence="3">
    <location>
        <begin position="62"/>
        <end position="82"/>
    </location>
</feature>
<feature type="transmembrane region" description="Helical" evidence="3">
    <location>
        <begin position="122"/>
        <end position="142"/>
    </location>
</feature>
<feature type="transmembrane region" description="Helical" evidence="3">
    <location>
        <begin position="196"/>
        <end position="213"/>
    </location>
</feature>
<feature type="transmembrane region" description="Helical" evidence="3">
    <location>
        <begin position="225"/>
        <end position="245"/>
    </location>
</feature>
<feature type="transmembrane region" description="Helical" evidence="3">
    <location>
        <begin position="252"/>
        <end position="272"/>
    </location>
</feature>
<feature type="splice variant" id="VSP_031829" description="In isoform 2." evidence="5 6">
    <location>
        <begin position="307"/>
        <end position="311"/>
    </location>
</feature>
<feature type="sequence conflict" description="In Ref. 2; BAC31601." evidence="7" ref="2">
    <original>L</original>
    <variation>P</variation>
    <location>
        <position position="68"/>
    </location>
</feature>
<feature type="sequence conflict" description="In Ref. 3; AAH31879." evidence="7" ref="3">
    <original>L</original>
    <variation>F</variation>
    <location>
        <position position="78"/>
    </location>
</feature>
<accession>Q8BJ52</accession>
<accession>Q8BIL7</accession>
<accession>Q8K0B6</accession>
<accession>Q9D606</accession>
<keyword id="KW-0025">Alternative splicing</keyword>
<keyword id="KW-1003">Cell membrane</keyword>
<keyword id="KW-0472">Membrane</keyword>
<keyword id="KW-1185">Reference proteome</keyword>
<keyword id="KW-0812">Transmembrane</keyword>
<keyword id="KW-1133">Transmembrane helix</keyword>
<name>PLPR5_MOUSE</name>
<sequence>MPLLPVALISSMLYFQMVIMAGTVMLAYYFEYTDTFTVNVQGFFCHDSAYRKPYPGPEDSSAVPPVLLYSLAAGVPVLVIIVGETAVFCLQLATRDFENQEKTILTGDCCYINPLVRRTVRFLGIYAFGLFATDIFVNAGQVVTGNLAPHFLALCKPNYTALGCQQYTQFISGEEACTGNPDLIMRARKTFPSKEAALSVYAATYLTMYITSTIKAKGTRLAKPVLCLGLMCLAFLTGLNRVAEYRNHWSDVIAGFLVGISIAVFLVVCVVNNFKGRQPENGHIHRDNVARMPMTNIPRVESPLEKVTSLQNHVTAFAEVT</sequence>
<reference key="1">
    <citation type="journal article" date="2010" name="Mol. Biol. Cell">
        <title>Plasticity-related gene 5 (PRG5) induces filopodia and neurite growth and impedes lysophosphatidic acid- and nogo-A-mediated axonal retraction.</title>
        <authorList>
            <person name="Broggini T."/>
            <person name="Nitsch R."/>
            <person name="Savaskan N.E."/>
        </authorList>
    </citation>
    <scope>NUCLEOTIDE SEQUENCE [MRNA] (ISOFORM 1)</scope>
    <scope>FUNCTION</scope>
    <scope>SUBCELLULAR LOCATION</scope>
    <source>
        <strain>C57BL/6J</strain>
        <tissue>Brain</tissue>
    </source>
</reference>
<reference key="2">
    <citation type="journal article" date="2005" name="Science">
        <title>The transcriptional landscape of the mammalian genome.</title>
        <authorList>
            <person name="Carninci P."/>
            <person name="Kasukawa T."/>
            <person name="Katayama S."/>
            <person name="Gough J."/>
            <person name="Frith M.C."/>
            <person name="Maeda N."/>
            <person name="Oyama R."/>
            <person name="Ravasi T."/>
            <person name="Lenhard B."/>
            <person name="Wells C."/>
            <person name="Kodzius R."/>
            <person name="Shimokawa K."/>
            <person name="Bajic V.B."/>
            <person name="Brenner S.E."/>
            <person name="Batalov S."/>
            <person name="Forrest A.R."/>
            <person name="Zavolan M."/>
            <person name="Davis M.J."/>
            <person name="Wilming L.G."/>
            <person name="Aidinis V."/>
            <person name="Allen J.E."/>
            <person name="Ambesi-Impiombato A."/>
            <person name="Apweiler R."/>
            <person name="Aturaliya R.N."/>
            <person name="Bailey T.L."/>
            <person name="Bansal M."/>
            <person name="Baxter L."/>
            <person name="Beisel K.W."/>
            <person name="Bersano T."/>
            <person name="Bono H."/>
            <person name="Chalk A.M."/>
            <person name="Chiu K.P."/>
            <person name="Choudhary V."/>
            <person name="Christoffels A."/>
            <person name="Clutterbuck D.R."/>
            <person name="Crowe M.L."/>
            <person name="Dalla E."/>
            <person name="Dalrymple B.P."/>
            <person name="de Bono B."/>
            <person name="Della Gatta G."/>
            <person name="di Bernardo D."/>
            <person name="Down T."/>
            <person name="Engstrom P."/>
            <person name="Fagiolini M."/>
            <person name="Faulkner G."/>
            <person name="Fletcher C.F."/>
            <person name="Fukushima T."/>
            <person name="Furuno M."/>
            <person name="Futaki S."/>
            <person name="Gariboldi M."/>
            <person name="Georgii-Hemming P."/>
            <person name="Gingeras T.R."/>
            <person name="Gojobori T."/>
            <person name="Green R.E."/>
            <person name="Gustincich S."/>
            <person name="Harbers M."/>
            <person name="Hayashi Y."/>
            <person name="Hensch T.K."/>
            <person name="Hirokawa N."/>
            <person name="Hill D."/>
            <person name="Huminiecki L."/>
            <person name="Iacono M."/>
            <person name="Ikeo K."/>
            <person name="Iwama A."/>
            <person name="Ishikawa T."/>
            <person name="Jakt M."/>
            <person name="Kanapin A."/>
            <person name="Katoh M."/>
            <person name="Kawasawa Y."/>
            <person name="Kelso J."/>
            <person name="Kitamura H."/>
            <person name="Kitano H."/>
            <person name="Kollias G."/>
            <person name="Krishnan S.P."/>
            <person name="Kruger A."/>
            <person name="Kummerfeld S.K."/>
            <person name="Kurochkin I.V."/>
            <person name="Lareau L.F."/>
            <person name="Lazarevic D."/>
            <person name="Lipovich L."/>
            <person name="Liu J."/>
            <person name="Liuni S."/>
            <person name="McWilliam S."/>
            <person name="Madan Babu M."/>
            <person name="Madera M."/>
            <person name="Marchionni L."/>
            <person name="Matsuda H."/>
            <person name="Matsuzawa S."/>
            <person name="Miki H."/>
            <person name="Mignone F."/>
            <person name="Miyake S."/>
            <person name="Morris K."/>
            <person name="Mottagui-Tabar S."/>
            <person name="Mulder N."/>
            <person name="Nakano N."/>
            <person name="Nakauchi H."/>
            <person name="Ng P."/>
            <person name="Nilsson R."/>
            <person name="Nishiguchi S."/>
            <person name="Nishikawa S."/>
            <person name="Nori F."/>
            <person name="Ohara O."/>
            <person name="Okazaki Y."/>
            <person name="Orlando V."/>
            <person name="Pang K.C."/>
            <person name="Pavan W.J."/>
            <person name="Pavesi G."/>
            <person name="Pesole G."/>
            <person name="Petrovsky N."/>
            <person name="Piazza S."/>
            <person name="Reed J."/>
            <person name="Reid J.F."/>
            <person name="Ring B.Z."/>
            <person name="Ringwald M."/>
            <person name="Rost B."/>
            <person name="Ruan Y."/>
            <person name="Salzberg S.L."/>
            <person name="Sandelin A."/>
            <person name="Schneider C."/>
            <person name="Schoenbach C."/>
            <person name="Sekiguchi K."/>
            <person name="Semple C.A."/>
            <person name="Seno S."/>
            <person name="Sessa L."/>
            <person name="Sheng Y."/>
            <person name="Shibata Y."/>
            <person name="Shimada H."/>
            <person name="Shimada K."/>
            <person name="Silva D."/>
            <person name="Sinclair B."/>
            <person name="Sperling S."/>
            <person name="Stupka E."/>
            <person name="Sugiura K."/>
            <person name="Sultana R."/>
            <person name="Takenaka Y."/>
            <person name="Taki K."/>
            <person name="Tammoja K."/>
            <person name="Tan S.L."/>
            <person name="Tang S."/>
            <person name="Taylor M.S."/>
            <person name="Tegner J."/>
            <person name="Teichmann S.A."/>
            <person name="Ueda H.R."/>
            <person name="van Nimwegen E."/>
            <person name="Verardo R."/>
            <person name="Wei C.L."/>
            <person name="Yagi K."/>
            <person name="Yamanishi H."/>
            <person name="Zabarovsky E."/>
            <person name="Zhu S."/>
            <person name="Zimmer A."/>
            <person name="Hide W."/>
            <person name="Bult C."/>
            <person name="Grimmond S.M."/>
            <person name="Teasdale R.D."/>
            <person name="Liu E.T."/>
            <person name="Brusic V."/>
            <person name="Quackenbush J."/>
            <person name="Wahlestedt C."/>
            <person name="Mattick J.S."/>
            <person name="Hume D.A."/>
            <person name="Kai C."/>
            <person name="Sasaki D."/>
            <person name="Tomaru Y."/>
            <person name="Fukuda S."/>
            <person name="Kanamori-Katayama M."/>
            <person name="Suzuki M."/>
            <person name="Aoki J."/>
            <person name="Arakawa T."/>
            <person name="Iida J."/>
            <person name="Imamura K."/>
            <person name="Itoh M."/>
            <person name="Kato T."/>
            <person name="Kawaji H."/>
            <person name="Kawagashira N."/>
            <person name="Kawashima T."/>
            <person name="Kojima M."/>
            <person name="Kondo S."/>
            <person name="Konno H."/>
            <person name="Nakano K."/>
            <person name="Ninomiya N."/>
            <person name="Nishio T."/>
            <person name="Okada M."/>
            <person name="Plessy C."/>
            <person name="Shibata K."/>
            <person name="Shiraki T."/>
            <person name="Suzuki S."/>
            <person name="Tagami M."/>
            <person name="Waki K."/>
            <person name="Watahiki A."/>
            <person name="Okamura-Oho Y."/>
            <person name="Suzuki H."/>
            <person name="Kawai J."/>
            <person name="Hayashizaki Y."/>
        </authorList>
    </citation>
    <scope>NUCLEOTIDE SEQUENCE [LARGE SCALE MRNA] (ISOFORMS 1 AND 2)</scope>
    <source>
        <strain>C57BL/6J</strain>
        <tissue>Brain cortex</tissue>
        <tissue>Head</tissue>
        <tissue>Medulla oblongata</tissue>
    </source>
</reference>
<reference key="3">
    <citation type="journal article" date="2004" name="Genome Res.">
        <title>The status, quality, and expansion of the NIH full-length cDNA project: the Mammalian Gene Collection (MGC).</title>
        <authorList>
            <consortium name="The MGC Project Team"/>
        </authorList>
    </citation>
    <scope>NUCLEOTIDE SEQUENCE [LARGE SCALE MRNA] (ISOFORM 2)</scope>
    <source>
        <tissue>Eye</tissue>
    </source>
</reference>
<dbReference type="EMBL" id="AY512657">
    <property type="protein sequence ID" value="AAS80161.1"/>
    <property type="molecule type" value="mRNA"/>
</dbReference>
<dbReference type="EMBL" id="AK014763">
    <property type="protein sequence ID" value="BAB29538.1"/>
    <property type="molecule type" value="mRNA"/>
</dbReference>
<dbReference type="EMBL" id="AK032034">
    <property type="protein sequence ID" value="BAC27663.1"/>
    <property type="molecule type" value="mRNA"/>
</dbReference>
<dbReference type="EMBL" id="AK043629">
    <property type="protein sequence ID" value="BAC31601.1"/>
    <property type="molecule type" value="mRNA"/>
</dbReference>
<dbReference type="EMBL" id="BC031879">
    <property type="protein sequence ID" value="AAH31879.1"/>
    <property type="molecule type" value="mRNA"/>
</dbReference>
<dbReference type="CCDS" id="CCDS17796.1">
    <molecule id="Q8BJ52-2"/>
</dbReference>
<dbReference type="CCDS" id="CCDS80009.1">
    <molecule id="Q8BJ52-1"/>
</dbReference>
<dbReference type="RefSeq" id="NP_001292380.1">
    <molecule id="Q8BJ52-1"/>
    <property type="nucleotide sequence ID" value="NM_001305451.1"/>
</dbReference>
<dbReference type="RefSeq" id="NP_083701.2">
    <molecule id="Q8BJ52-2"/>
    <property type="nucleotide sequence ID" value="NM_029425.3"/>
</dbReference>
<dbReference type="FunCoup" id="Q8BJ52">
    <property type="interactions" value="560"/>
</dbReference>
<dbReference type="STRING" id="10090.ENSMUSP00000102081"/>
<dbReference type="iPTMnet" id="Q8BJ52"/>
<dbReference type="PhosphoSitePlus" id="Q8BJ52"/>
<dbReference type="SwissPalm" id="Q8BJ52"/>
<dbReference type="PaxDb" id="10090-ENSMUSP00000045121"/>
<dbReference type="ProteomicsDB" id="289694">
    <molecule id="Q8BJ52-1"/>
</dbReference>
<dbReference type="ProteomicsDB" id="289695">
    <molecule id="Q8BJ52-2"/>
</dbReference>
<dbReference type="Antibodypedia" id="19967">
    <property type="antibodies" value="117 antibodies from 18 providers"/>
</dbReference>
<dbReference type="DNASU" id="75769"/>
<dbReference type="Ensembl" id="ENSMUST00000039564.11">
    <molecule id="Q8BJ52-2"/>
    <property type="protein sequence ID" value="ENSMUSP00000045121.7"/>
    <property type="gene ID" value="ENSMUSG00000033342.16"/>
</dbReference>
<dbReference type="Ensembl" id="ENSMUST00000106473.5">
    <molecule id="Q8BJ52-1"/>
    <property type="protein sequence ID" value="ENSMUSP00000102081.3"/>
    <property type="gene ID" value="ENSMUSG00000033342.16"/>
</dbReference>
<dbReference type="GeneID" id="75769"/>
<dbReference type="KEGG" id="mmu:75769"/>
<dbReference type="UCSC" id="uc008rda.3">
    <molecule id="Q8BJ52-2"/>
    <property type="organism name" value="mouse"/>
</dbReference>
<dbReference type="UCSC" id="uc008rdb.3">
    <molecule id="Q8BJ52-1"/>
    <property type="organism name" value="mouse"/>
</dbReference>
<dbReference type="AGR" id="MGI:1923019"/>
<dbReference type="CTD" id="163404"/>
<dbReference type="MGI" id="MGI:1923019">
    <property type="gene designation" value="Plppr5"/>
</dbReference>
<dbReference type="VEuPathDB" id="HostDB:ENSMUSG00000033342"/>
<dbReference type="eggNOG" id="KOG3030">
    <property type="taxonomic scope" value="Eukaryota"/>
</dbReference>
<dbReference type="GeneTree" id="ENSGT00940000158610"/>
<dbReference type="HOGENOM" id="CLU_021458_1_0_1"/>
<dbReference type="InParanoid" id="Q8BJ52"/>
<dbReference type="OMA" id="SLMCMAF"/>
<dbReference type="OrthoDB" id="7660at9989"/>
<dbReference type="PhylomeDB" id="Q8BJ52"/>
<dbReference type="TreeFam" id="TF316040"/>
<dbReference type="Reactome" id="R-MMU-419408">
    <property type="pathway name" value="Lysosphingolipid and LPA receptors"/>
</dbReference>
<dbReference type="BioGRID-ORCS" id="75769">
    <property type="hits" value="3 hits in 30 CRISPR screens"/>
</dbReference>
<dbReference type="PRO" id="PR:Q8BJ52"/>
<dbReference type="Proteomes" id="UP000000589">
    <property type="component" value="Chromosome 3"/>
</dbReference>
<dbReference type="RNAct" id="Q8BJ52">
    <property type="molecule type" value="protein"/>
</dbReference>
<dbReference type="Bgee" id="ENSMUSG00000033342">
    <property type="expression patterns" value="Expressed in lumbar subsegment of spinal cord and 95 other cell types or tissues"/>
</dbReference>
<dbReference type="ExpressionAtlas" id="Q8BJ52">
    <property type="expression patterns" value="baseline and differential"/>
</dbReference>
<dbReference type="GO" id="GO:0005886">
    <property type="term" value="C:plasma membrane"/>
    <property type="evidence" value="ECO:0000314"/>
    <property type="project" value="UniProtKB"/>
</dbReference>
<dbReference type="GO" id="GO:0006644">
    <property type="term" value="P:phospholipid metabolic process"/>
    <property type="evidence" value="ECO:0007669"/>
    <property type="project" value="InterPro"/>
</dbReference>
<dbReference type="GO" id="GO:0051491">
    <property type="term" value="P:positive regulation of filopodium assembly"/>
    <property type="evidence" value="ECO:0000315"/>
    <property type="project" value="UniProtKB"/>
</dbReference>
<dbReference type="GO" id="GO:0010976">
    <property type="term" value="P:positive regulation of neuron projection development"/>
    <property type="evidence" value="ECO:0000315"/>
    <property type="project" value="UniProtKB"/>
</dbReference>
<dbReference type="CDD" id="cd03384">
    <property type="entry name" value="PAP2_wunen"/>
    <property type="match status" value="1"/>
</dbReference>
<dbReference type="FunFam" id="1.20.144.10:FF:000002">
    <property type="entry name" value="phospholipid phosphatase-related protein type 5"/>
    <property type="match status" value="1"/>
</dbReference>
<dbReference type="Gene3D" id="1.20.144.10">
    <property type="entry name" value="Phosphatidic acid phosphatase type 2/haloperoxidase"/>
    <property type="match status" value="1"/>
</dbReference>
<dbReference type="InterPro" id="IPR036938">
    <property type="entry name" value="P_Acid_Pase_2/haloperoxi_sf"/>
</dbReference>
<dbReference type="InterPro" id="IPR000326">
    <property type="entry name" value="P_Acid_Pase_2/haloperoxidase"/>
</dbReference>
<dbReference type="InterPro" id="IPR043216">
    <property type="entry name" value="PA_PP_rel"/>
</dbReference>
<dbReference type="PANTHER" id="PTHR10165">
    <property type="entry name" value="LIPID PHOSPHATE PHOSPHATASE"/>
    <property type="match status" value="1"/>
</dbReference>
<dbReference type="PANTHER" id="PTHR10165:SF17">
    <property type="entry name" value="PHOSPHOLIPID PHOSPHATASE-RELATED PROTEIN TYPE 5"/>
    <property type="match status" value="1"/>
</dbReference>
<dbReference type="Pfam" id="PF01569">
    <property type="entry name" value="PAP2"/>
    <property type="match status" value="1"/>
</dbReference>
<dbReference type="SMART" id="SM00014">
    <property type="entry name" value="acidPPc"/>
    <property type="match status" value="1"/>
</dbReference>
<dbReference type="SUPFAM" id="SSF48317">
    <property type="entry name" value="Acid phosphatase/Vanadium-dependent haloperoxidase"/>
    <property type="match status" value="1"/>
</dbReference>